<accession>P04568</accession>
<keyword id="KW-1185">Reference proteome</keyword>
<keyword id="KW-0346">Stress response</keyword>
<gene>
    <name type="primary">EM</name>
</gene>
<comment type="function">
    <text>It is thought to provide protection for the cytoplasm during the desiccation stage of embryo development.</text>
</comment>
<comment type="developmental stage">
    <text>One of the major proteins synthesized by wheat embryos during the very early stage of germination.</text>
</comment>
<comment type="induction">
    <text>By abscisic acid (ABA) and osmotic stress.</text>
</comment>
<comment type="miscellaneous">
    <text>Wheat contains at least 10 different genes for Em protein.</text>
</comment>
<comment type="similarity">
    <text evidence="2">Belongs to the small hydrophilic plant seed protein family.</text>
</comment>
<evidence type="ECO:0000256" key="1">
    <source>
        <dbReference type="SAM" id="MobiDB-lite"/>
    </source>
</evidence>
<evidence type="ECO:0000305" key="2"/>
<sequence length="93" mass="9963">MASGQQERSQLDRKAREGETVVPGGTGGKSLEAQENLAEGRSRGGQTRREQMGEEGYSQMGRKGGLSTNDESGGDRAAREGIDIDESKFKTKS</sequence>
<reference key="1">
    <citation type="journal article" date="1987" name="Nucleic Acids Res.">
        <title>The nucleotide sequence of a cDNA clone encoding the wheat Em protein.</title>
        <authorList>
            <person name="Litts J.C."/>
            <person name="Colewell G.W."/>
            <person name="Chakerian R.L."/>
            <person name="Quatrano R.S."/>
        </authorList>
    </citation>
    <scope>NUCLEOTIDE SEQUENCE [MRNA]</scope>
    <source>
        <strain>cv. Chinese Spring</strain>
        <tissue>Embryo</tissue>
    </source>
</reference>
<organism>
    <name type="scientific">Triticum aestivum</name>
    <name type="common">Wheat</name>
    <dbReference type="NCBI Taxonomy" id="4565"/>
    <lineage>
        <taxon>Eukaryota</taxon>
        <taxon>Viridiplantae</taxon>
        <taxon>Streptophyta</taxon>
        <taxon>Embryophyta</taxon>
        <taxon>Tracheophyta</taxon>
        <taxon>Spermatophyta</taxon>
        <taxon>Magnoliopsida</taxon>
        <taxon>Liliopsida</taxon>
        <taxon>Poales</taxon>
        <taxon>Poaceae</taxon>
        <taxon>BOP clade</taxon>
        <taxon>Pooideae</taxon>
        <taxon>Triticodae</taxon>
        <taxon>Triticeae</taxon>
        <taxon>Triticinae</taxon>
        <taxon>Triticum</taxon>
    </lineage>
</organism>
<feature type="chain" id="PRO_0000185689" description="Em protein">
    <location>
        <begin position="1"/>
        <end position="93"/>
    </location>
</feature>
<feature type="region of interest" description="Disordered" evidence="1">
    <location>
        <begin position="1"/>
        <end position="93"/>
    </location>
</feature>
<feature type="compositionally biased region" description="Basic and acidic residues" evidence="1">
    <location>
        <begin position="9"/>
        <end position="19"/>
    </location>
</feature>
<feature type="compositionally biased region" description="Basic and acidic residues" evidence="1">
    <location>
        <begin position="38"/>
        <end position="52"/>
    </location>
</feature>
<feature type="compositionally biased region" description="Basic and acidic residues" evidence="1">
    <location>
        <begin position="73"/>
        <end position="93"/>
    </location>
</feature>
<proteinExistence type="evidence at transcript level"/>
<name>EM1_WHEAT</name>
<dbReference type="EMBL" id="Y00123">
    <property type="protein sequence ID" value="CAA68322.1"/>
    <property type="molecule type" value="mRNA"/>
</dbReference>
<dbReference type="PIR" id="A27519">
    <property type="entry name" value="A27519"/>
</dbReference>
<dbReference type="STRING" id="4565.P04568"/>
<dbReference type="PaxDb" id="4565-Traes_1BL_054EDFEB2.1"/>
<dbReference type="EnsemblPlants" id="TraesARI1B03G00308420.1">
    <property type="protein sequence ID" value="TraesARI1B03G00308420.1"/>
    <property type="gene ID" value="TraesARI1B03G00308420"/>
</dbReference>
<dbReference type="EnsemblPlants" id="TraesCLE_scaffold_035666_01G000200.1">
    <property type="protein sequence ID" value="TraesCLE_scaffold_035666_01G000200.1"/>
    <property type="gene ID" value="TraesCLE_scaffold_035666_01G000200"/>
</dbReference>
<dbReference type="EnsemblPlants" id="TraesCS1B02G237500.1">
    <property type="protein sequence ID" value="TraesCS1B02G237500.1"/>
    <property type="gene ID" value="TraesCS1B02G237500"/>
</dbReference>
<dbReference type="EnsemblPlants" id="TraesCS1B03G0679100.1">
    <property type="protein sequence ID" value="TraesCS1B03G0679100.1.CDS"/>
    <property type="gene ID" value="TraesCS1B03G0679100"/>
</dbReference>
<dbReference type="EnsemblPlants" id="TraesJAG1B03G00305220.1">
    <property type="protein sequence ID" value="TraesJAG1B03G00305220.1"/>
    <property type="gene ID" value="TraesJAG1B03G00305220"/>
</dbReference>
<dbReference type="EnsemblPlants" id="TraesJUL1B03G00305420.1">
    <property type="protein sequence ID" value="TraesJUL1B03G00305420.1"/>
    <property type="gene ID" value="TraesJUL1B03G00305420"/>
</dbReference>
<dbReference type="EnsemblPlants" id="TraesKAR1B01G0280190.1">
    <property type="protein sequence ID" value="cds.TraesKAR1B01G0280190.1"/>
    <property type="gene ID" value="TraesKAR1B01G0280190"/>
</dbReference>
<dbReference type="EnsemblPlants" id="TraesLDM1B03G00305560.1">
    <property type="protein sequence ID" value="TraesLDM1B03G00305560.1"/>
    <property type="gene ID" value="TraesLDM1B03G00305560"/>
</dbReference>
<dbReference type="EnsemblPlants" id="TraesMAC1B03G00307570.1">
    <property type="protein sequence ID" value="TraesMAC1B03G00307570.1"/>
    <property type="gene ID" value="TraesMAC1B03G00307570"/>
</dbReference>
<dbReference type="EnsemblPlants" id="TraesPARA_EIv1.0_0168550.1">
    <property type="protein sequence ID" value="TraesPARA_EIv1.0_0168550.1.CDS"/>
    <property type="gene ID" value="TraesPARA_EIv1.0_0168550"/>
</dbReference>
<dbReference type="EnsemblPlants" id="TraesROB_scaffold_039375_01G000200.1">
    <property type="protein sequence ID" value="TraesROB_scaffold_039375_01G000200.1"/>
    <property type="gene ID" value="TraesROB_scaffold_039375_01G000200"/>
</dbReference>
<dbReference type="EnsemblPlants" id="TraesSTA1B03G00304090.1">
    <property type="protein sequence ID" value="TraesSTA1B03G00304090.1"/>
    <property type="gene ID" value="TraesSTA1B03G00304090"/>
</dbReference>
<dbReference type="EnsemblPlants" id="TraesSYM1B03G00312370.1">
    <property type="protein sequence ID" value="TraesSYM1B03G00312370.1"/>
    <property type="gene ID" value="TraesSYM1B03G00312370"/>
</dbReference>
<dbReference type="EnsemblPlants" id="TraesWEE_scaffold_001647_01G000200.1">
    <property type="protein sequence ID" value="TraesWEE_scaffold_001647_01G000200.1"/>
    <property type="gene ID" value="TraesWEE_scaffold_001647_01G000200"/>
</dbReference>
<dbReference type="Gramene" id="TraesARI1B03G00308420.1">
    <property type="protein sequence ID" value="TraesARI1B03G00308420.1"/>
    <property type="gene ID" value="TraesARI1B03G00308420"/>
</dbReference>
<dbReference type="Gramene" id="TraesCLE_scaffold_035666_01G000200.1">
    <property type="protein sequence ID" value="TraesCLE_scaffold_035666_01G000200.1"/>
    <property type="gene ID" value="TraesCLE_scaffold_035666_01G000200"/>
</dbReference>
<dbReference type="Gramene" id="TraesCS1B02G237500.1">
    <property type="protein sequence ID" value="TraesCS1B02G237500.1"/>
    <property type="gene ID" value="TraesCS1B02G237500"/>
</dbReference>
<dbReference type="Gramene" id="TraesCS1B03G0679100.1">
    <property type="protein sequence ID" value="TraesCS1B03G0679100.1.CDS"/>
    <property type="gene ID" value="TraesCS1B03G0679100"/>
</dbReference>
<dbReference type="Gramene" id="TraesJAG1B03G00305220.1">
    <property type="protein sequence ID" value="TraesJAG1B03G00305220.1"/>
    <property type="gene ID" value="TraesJAG1B03G00305220"/>
</dbReference>
<dbReference type="Gramene" id="TraesJUL1B03G00305420.1">
    <property type="protein sequence ID" value="TraesJUL1B03G00305420.1"/>
    <property type="gene ID" value="TraesJUL1B03G00305420"/>
</dbReference>
<dbReference type="Gramene" id="TraesKAR1B01G0280190.1">
    <property type="protein sequence ID" value="cds.TraesKAR1B01G0280190.1"/>
    <property type="gene ID" value="TraesKAR1B01G0280190"/>
</dbReference>
<dbReference type="Gramene" id="TraesLDM1B03G00305560.1">
    <property type="protein sequence ID" value="TraesLDM1B03G00305560.1"/>
    <property type="gene ID" value="TraesLDM1B03G00305560"/>
</dbReference>
<dbReference type="Gramene" id="TraesMAC1B03G00307570.1">
    <property type="protein sequence ID" value="TraesMAC1B03G00307570.1"/>
    <property type="gene ID" value="TraesMAC1B03G00307570"/>
</dbReference>
<dbReference type="Gramene" id="TraesPARA_EIv1.0_0168550.1">
    <property type="protein sequence ID" value="TraesPARA_EIv1.0_0168550.1.CDS"/>
    <property type="gene ID" value="TraesPARA_EIv1.0_0168550"/>
</dbReference>
<dbReference type="Gramene" id="TraesROB_scaffold_039375_01G000200.1">
    <property type="protein sequence ID" value="TraesROB_scaffold_039375_01G000200.1"/>
    <property type="gene ID" value="TraesROB_scaffold_039375_01G000200"/>
</dbReference>
<dbReference type="Gramene" id="TraesSTA1B03G00304090.1">
    <property type="protein sequence ID" value="TraesSTA1B03G00304090.1"/>
    <property type="gene ID" value="TraesSTA1B03G00304090"/>
</dbReference>
<dbReference type="Gramene" id="TraesSYM1B03G00312370.1">
    <property type="protein sequence ID" value="TraesSYM1B03G00312370.1"/>
    <property type="gene ID" value="TraesSYM1B03G00312370"/>
</dbReference>
<dbReference type="Gramene" id="TraesWEE_scaffold_001647_01G000200.1">
    <property type="protein sequence ID" value="TraesWEE_scaffold_001647_01G000200.1"/>
    <property type="gene ID" value="TraesWEE_scaffold_001647_01G000200"/>
</dbReference>
<dbReference type="eggNOG" id="ENOG502S40U">
    <property type="taxonomic scope" value="Eukaryota"/>
</dbReference>
<dbReference type="HOGENOM" id="CLU_144393_0_0_1"/>
<dbReference type="OMA" id="DESKFRM"/>
<dbReference type="OrthoDB" id="540492at2759"/>
<dbReference type="Proteomes" id="UP000019116">
    <property type="component" value="Chromosome 1B"/>
</dbReference>
<dbReference type="ExpressionAtlas" id="P04568">
    <property type="expression patterns" value="baseline and differential"/>
</dbReference>
<dbReference type="GO" id="GO:0009737">
    <property type="term" value="P:response to abscisic acid"/>
    <property type="evidence" value="ECO:0000318"/>
    <property type="project" value="GO_Central"/>
</dbReference>
<dbReference type="InterPro" id="IPR038956">
    <property type="entry name" value="LEA_5"/>
</dbReference>
<dbReference type="InterPro" id="IPR022377">
    <property type="entry name" value="Sm_Hydphi_plant_seed_CS"/>
</dbReference>
<dbReference type="InterPro" id="IPR000389">
    <property type="entry name" value="Small_hydrophilic_seed_prot"/>
</dbReference>
<dbReference type="PANTHER" id="PTHR34671:SF14">
    <property type="entry name" value="EM PROTEIN"/>
    <property type="match status" value="1"/>
</dbReference>
<dbReference type="PANTHER" id="PTHR34671">
    <property type="entry name" value="EM-LIKE PROTEIN GEA1"/>
    <property type="match status" value="1"/>
</dbReference>
<dbReference type="Pfam" id="PF00477">
    <property type="entry name" value="LEA_5"/>
    <property type="match status" value="1"/>
</dbReference>
<dbReference type="PROSITE" id="PS00431">
    <property type="entry name" value="SMALL_HYDR_PLANT_SEED"/>
    <property type="match status" value="1"/>
</dbReference>
<protein>
    <recommendedName>
        <fullName>Em protein</fullName>
    </recommendedName>
</protein>